<proteinExistence type="inferred from homology"/>
<protein>
    <recommendedName>
        <fullName evidence="1">Probable glycine dehydrogenase (decarboxylating) subunit 1</fullName>
        <ecNumber evidence="1">1.4.4.2</ecNumber>
    </recommendedName>
    <alternativeName>
        <fullName evidence="1">Glycine cleavage system P-protein subunit 1</fullName>
    </alternativeName>
    <alternativeName>
        <fullName evidence="1">Glycine decarboxylase subunit 1</fullName>
    </alternativeName>
    <alternativeName>
        <fullName evidence="1">Glycine dehydrogenase (aminomethyl-transferring) subunit 1</fullName>
    </alternativeName>
</protein>
<keyword id="KW-0560">Oxidoreductase</keyword>
<keyword id="KW-1185">Reference proteome</keyword>
<reference key="1">
    <citation type="journal article" date="1998" name="Nature">
        <title>The complete genome of the hyperthermophilic bacterium Aquifex aeolicus.</title>
        <authorList>
            <person name="Deckert G."/>
            <person name="Warren P.V."/>
            <person name="Gaasterland T."/>
            <person name="Young W.G."/>
            <person name="Lenox A.L."/>
            <person name="Graham D.E."/>
            <person name="Overbeek R."/>
            <person name="Snead M.A."/>
            <person name="Keller M."/>
            <person name="Aujay M."/>
            <person name="Huber R."/>
            <person name="Feldman R.A."/>
            <person name="Short J.M."/>
            <person name="Olsen G.J."/>
            <person name="Swanson R.V."/>
        </authorList>
    </citation>
    <scope>NUCLEOTIDE SEQUENCE [LARGE SCALE GENOMIC DNA]</scope>
    <source>
        <strain>VF5</strain>
    </source>
</reference>
<sequence>MSYIPHSEEETKEILSKLGLESLEDLFSHIPKELFAKDFSFPEPKSEEELRRIFERACEDTELPLYFIGAGAYDRIIPSVIWQILSRGEFLTPYTPYQAEASQGTLQAIFEYQSLICELTGMDVANASMYDGASALAEAVLMARAIKGKGDTVVLSKALNPLYRRTVKTYLRGYEDKIVEVPYTEEGTTDLNNLEEVLKESEVHALAVQYPNFFGFVEPLKEIGELCKKYEVPFVVFVDPIALSILKPPAEFGADIVVGEGQQMGIPLSFGGPYVGFFATKKEHVRKMPGRLVGMGEDIEGKRAFTLVLQTREQHIRRERATSNICTNQNLMALANLLYMVLLGKEGMKKVAVQSLSKALYFKKELMKKGFEEVFTGKHLWEFPLRHESLKAIYRKLLKEKIVLGLPLDRFYEDLKNTTLIAVTEKRTKEEIDSVLALL</sequence>
<organism>
    <name type="scientific">Aquifex aeolicus (strain VF5)</name>
    <dbReference type="NCBI Taxonomy" id="224324"/>
    <lineage>
        <taxon>Bacteria</taxon>
        <taxon>Pseudomonadati</taxon>
        <taxon>Aquificota</taxon>
        <taxon>Aquificia</taxon>
        <taxon>Aquificales</taxon>
        <taxon>Aquificaceae</taxon>
        <taxon>Aquifex</taxon>
    </lineage>
</organism>
<dbReference type="EC" id="1.4.4.2" evidence="1"/>
<dbReference type="EMBL" id="AE000657">
    <property type="protein sequence ID" value="AAC07143.1"/>
    <property type="molecule type" value="Genomic_DNA"/>
</dbReference>
<dbReference type="PIR" id="F70395">
    <property type="entry name" value="F70395"/>
</dbReference>
<dbReference type="RefSeq" id="NP_213757.1">
    <property type="nucleotide sequence ID" value="NC_000918.1"/>
</dbReference>
<dbReference type="RefSeq" id="WP_010880695.1">
    <property type="nucleotide sequence ID" value="NC_000918.1"/>
</dbReference>
<dbReference type="SMR" id="O67193"/>
<dbReference type="STRING" id="224324.aq_1109"/>
<dbReference type="EnsemblBacteria" id="AAC07143">
    <property type="protein sequence ID" value="AAC07143"/>
    <property type="gene ID" value="aq_1109"/>
</dbReference>
<dbReference type="KEGG" id="aae:aq_1109"/>
<dbReference type="PATRIC" id="fig|224324.8.peg.866"/>
<dbReference type="eggNOG" id="COG0403">
    <property type="taxonomic scope" value="Bacteria"/>
</dbReference>
<dbReference type="HOGENOM" id="CLU_004620_0_2_0"/>
<dbReference type="InParanoid" id="O67193"/>
<dbReference type="OrthoDB" id="9771867at2"/>
<dbReference type="Proteomes" id="UP000000798">
    <property type="component" value="Chromosome"/>
</dbReference>
<dbReference type="GO" id="GO:0004375">
    <property type="term" value="F:glycine dehydrogenase (decarboxylating) activity"/>
    <property type="evidence" value="ECO:0007669"/>
    <property type="project" value="UniProtKB-EC"/>
</dbReference>
<dbReference type="GO" id="GO:0019464">
    <property type="term" value="P:glycine decarboxylation via glycine cleavage system"/>
    <property type="evidence" value="ECO:0007669"/>
    <property type="project" value="UniProtKB-UniRule"/>
</dbReference>
<dbReference type="GO" id="GO:0009116">
    <property type="term" value="P:nucleoside metabolic process"/>
    <property type="evidence" value="ECO:0007669"/>
    <property type="project" value="InterPro"/>
</dbReference>
<dbReference type="CDD" id="cd00613">
    <property type="entry name" value="GDC-P"/>
    <property type="match status" value="1"/>
</dbReference>
<dbReference type="Gene3D" id="3.90.1150.10">
    <property type="entry name" value="Aspartate Aminotransferase, domain 1"/>
    <property type="match status" value="1"/>
</dbReference>
<dbReference type="Gene3D" id="3.40.640.10">
    <property type="entry name" value="Type I PLP-dependent aspartate aminotransferase-like (Major domain)"/>
    <property type="match status" value="1"/>
</dbReference>
<dbReference type="HAMAP" id="MF_00712">
    <property type="entry name" value="GcvPA"/>
    <property type="match status" value="1"/>
</dbReference>
<dbReference type="InterPro" id="IPR023010">
    <property type="entry name" value="GcvPA"/>
</dbReference>
<dbReference type="InterPro" id="IPR049315">
    <property type="entry name" value="GDC-P_N"/>
</dbReference>
<dbReference type="InterPro" id="IPR020581">
    <property type="entry name" value="GDC_P"/>
</dbReference>
<dbReference type="InterPro" id="IPR015424">
    <property type="entry name" value="PyrdxlP-dep_Trfase"/>
</dbReference>
<dbReference type="InterPro" id="IPR015421">
    <property type="entry name" value="PyrdxlP-dep_Trfase_major"/>
</dbReference>
<dbReference type="InterPro" id="IPR015422">
    <property type="entry name" value="PyrdxlP-dep_Trfase_small"/>
</dbReference>
<dbReference type="NCBIfam" id="NF001696">
    <property type="entry name" value="PRK00451.1"/>
    <property type="match status" value="1"/>
</dbReference>
<dbReference type="PANTHER" id="PTHR42806">
    <property type="entry name" value="GLYCINE CLEAVAGE SYSTEM P-PROTEIN"/>
    <property type="match status" value="1"/>
</dbReference>
<dbReference type="PANTHER" id="PTHR42806:SF1">
    <property type="entry name" value="GLYCINE DEHYDROGENASE (DECARBOXYLATING)"/>
    <property type="match status" value="1"/>
</dbReference>
<dbReference type="Pfam" id="PF02347">
    <property type="entry name" value="GDC-P"/>
    <property type="match status" value="1"/>
</dbReference>
<dbReference type="PIRSF" id="PIRSF006815">
    <property type="entry name" value="GcvPA"/>
    <property type="match status" value="1"/>
</dbReference>
<dbReference type="SUPFAM" id="SSF53383">
    <property type="entry name" value="PLP-dependent transferases"/>
    <property type="match status" value="1"/>
</dbReference>
<comment type="function">
    <text evidence="1">The glycine cleavage system catalyzes the degradation of glycine. The P protein binds the alpha-amino group of glycine through its pyridoxal phosphate cofactor; CO(2) is released and the remaining methylamine moiety is then transferred to the lipoamide cofactor of the H protein.</text>
</comment>
<comment type="catalytic activity">
    <reaction evidence="1">
        <text>N(6)-[(R)-lipoyl]-L-lysyl-[glycine-cleavage complex H protein] + glycine + H(+) = N(6)-[(R)-S(8)-aminomethyldihydrolipoyl]-L-lysyl-[glycine-cleavage complex H protein] + CO2</text>
        <dbReference type="Rhea" id="RHEA:24304"/>
        <dbReference type="Rhea" id="RHEA-COMP:10494"/>
        <dbReference type="Rhea" id="RHEA-COMP:10495"/>
        <dbReference type="ChEBI" id="CHEBI:15378"/>
        <dbReference type="ChEBI" id="CHEBI:16526"/>
        <dbReference type="ChEBI" id="CHEBI:57305"/>
        <dbReference type="ChEBI" id="CHEBI:83099"/>
        <dbReference type="ChEBI" id="CHEBI:83143"/>
        <dbReference type="EC" id="1.4.4.2"/>
    </reaction>
</comment>
<comment type="subunit">
    <text evidence="1">The glycine cleavage system is composed of four proteins: P, T, L and H. In this organism, the P 'protein' is a heterodimer of two subunits.</text>
</comment>
<comment type="similarity">
    <text evidence="1">Belongs to the GcvP family. N-terminal subunit subfamily.</text>
</comment>
<feature type="chain" id="PRO_0000166953" description="Probable glycine dehydrogenase (decarboxylating) subunit 1">
    <location>
        <begin position="1"/>
        <end position="439"/>
    </location>
</feature>
<accession>O67193</accession>
<name>GCSPA_AQUAE</name>
<gene>
    <name evidence="1" type="primary">gcvPA</name>
    <name type="synonym">gcsP2</name>
    <name type="ordered locus">aq_1109</name>
</gene>
<evidence type="ECO:0000255" key="1">
    <source>
        <dbReference type="HAMAP-Rule" id="MF_00712"/>
    </source>
</evidence>